<feature type="chain" id="PRO_0000112407" description="N-acetyl-gamma-glutamyl-phosphate reductase">
    <location>
        <begin position="1"/>
        <end position="344"/>
    </location>
</feature>
<feature type="active site" evidence="1">
    <location>
        <position position="148"/>
    </location>
</feature>
<organism>
    <name type="scientific">Geobacillus kaustophilus (strain HTA426)</name>
    <dbReference type="NCBI Taxonomy" id="235909"/>
    <lineage>
        <taxon>Bacteria</taxon>
        <taxon>Bacillati</taxon>
        <taxon>Bacillota</taxon>
        <taxon>Bacilli</taxon>
        <taxon>Bacillales</taxon>
        <taxon>Anoxybacillaceae</taxon>
        <taxon>Geobacillus</taxon>
        <taxon>Geobacillus thermoleovorans group</taxon>
    </lineage>
</organism>
<proteinExistence type="inferred from homology"/>
<name>ARGC_GEOKA</name>
<comment type="function">
    <text evidence="1">Catalyzes the NADPH-dependent reduction of N-acetyl-5-glutamyl phosphate to yield N-acetyl-L-glutamate 5-semialdehyde.</text>
</comment>
<comment type="catalytic activity">
    <reaction evidence="1">
        <text>N-acetyl-L-glutamate 5-semialdehyde + phosphate + NADP(+) = N-acetyl-L-glutamyl 5-phosphate + NADPH + H(+)</text>
        <dbReference type="Rhea" id="RHEA:21588"/>
        <dbReference type="ChEBI" id="CHEBI:15378"/>
        <dbReference type="ChEBI" id="CHEBI:29123"/>
        <dbReference type="ChEBI" id="CHEBI:43474"/>
        <dbReference type="ChEBI" id="CHEBI:57783"/>
        <dbReference type="ChEBI" id="CHEBI:57936"/>
        <dbReference type="ChEBI" id="CHEBI:58349"/>
        <dbReference type="EC" id="1.2.1.38"/>
    </reaction>
</comment>
<comment type="pathway">
    <text evidence="1">Amino-acid biosynthesis; L-arginine biosynthesis; N(2)-acetyl-L-ornithine from L-glutamate: step 3/4.</text>
</comment>
<comment type="subcellular location">
    <subcellularLocation>
        <location evidence="1">Cytoplasm</location>
    </subcellularLocation>
</comment>
<comment type="similarity">
    <text evidence="1">Belongs to the NAGSA dehydrogenase family. Type 1 subfamily.</text>
</comment>
<gene>
    <name evidence="1" type="primary">argC</name>
    <name type="ordered locus">GK0790</name>
</gene>
<evidence type="ECO:0000255" key="1">
    <source>
        <dbReference type="HAMAP-Rule" id="MF_00150"/>
    </source>
</evidence>
<accession>Q5L1V5</accession>
<sequence>MNVAIIGATGYSGAELFRLLHGHPHVSRCDVFSSSQDGVHVSESFPHVGSVDGAVLHKLEIEALSRYDAVFFATPPGVSGEWAPALVDRGVKVIDLSGDFRLKDGAVYEQWYGREAAPAEYLQKAVYGLTEWNREAVREAVLLSNPGCYPTATLLGLAPLVKEGLIQEDSIIVDAKSGVSGAGRKAGLGTHFSEVNENVKIYKVNVHQHIPEIEQTLQTWNEAMEPITFSTHLIPMTRGIMATIYAKAKQPISPNDLVDLYKTSYEGSPFIRVRKVGQFPATKEVYGSNYCDIGLAYDERTGRVTVVSVIDNLMKGAAGQAVQNFNLMMGWDEAEGLQSLPIYP</sequence>
<dbReference type="EC" id="1.2.1.38" evidence="1"/>
<dbReference type="EMBL" id="BA000043">
    <property type="protein sequence ID" value="BAD75075.1"/>
    <property type="molecule type" value="Genomic_DNA"/>
</dbReference>
<dbReference type="RefSeq" id="WP_011230291.1">
    <property type="nucleotide sequence ID" value="NC_006510.1"/>
</dbReference>
<dbReference type="SMR" id="Q5L1V5"/>
<dbReference type="STRING" id="235909.GK0790"/>
<dbReference type="KEGG" id="gka:GK0790"/>
<dbReference type="eggNOG" id="COG0002">
    <property type="taxonomic scope" value="Bacteria"/>
</dbReference>
<dbReference type="HOGENOM" id="CLU_006384_0_1_9"/>
<dbReference type="UniPathway" id="UPA00068">
    <property type="reaction ID" value="UER00108"/>
</dbReference>
<dbReference type="Proteomes" id="UP000001172">
    <property type="component" value="Chromosome"/>
</dbReference>
<dbReference type="GO" id="GO:0005737">
    <property type="term" value="C:cytoplasm"/>
    <property type="evidence" value="ECO:0007669"/>
    <property type="project" value="UniProtKB-SubCell"/>
</dbReference>
<dbReference type="GO" id="GO:0003942">
    <property type="term" value="F:N-acetyl-gamma-glutamyl-phosphate reductase activity"/>
    <property type="evidence" value="ECO:0007669"/>
    <property type="project" value="UniProtKB-UniRule"/>
</dbReference>
<dbReference type="GO" id="GO:0051287">
    <property type="term" value="F:NAD binding"/>
    <property type="evidence" value="ECO:0007669"/>
    <property type="project" value="InterPro"/>
</dbReference>
<dbReference type="GO" id="GO:0070401">
    <property type="term" value="F:NADP+ binding"/>
    <property type="evidence" value="ECO:0007669"/>
    <property type="project" value="InterPro"/>
</dbReference>
<dbReference type="GO" id="GO:0006526">
    <property type="term" value="P:L-arginine biosynthetic process"/>
    <property type="evidence" value="ECO:0007669"/>
    <property type="project" value="UniProtKB-UniRule"/>
</dbReference>
<dbReference type="CDD" id="cd23934">
    <property type="entry name" value="AGPR_1_C"/>
    <property type="match status" value="1"/>
</dbReference>
<dbReference type="CDD" id="cd17895">
    <property type="entry name" value="AGPR_1_N"/>
    <property type="match status" value="1"/>
</dbReference>
<dbReference type="FunFam" id="3.30.360.10:FF:000014">
    <property type="entry name" value="N-acetyl-gamma-glutamyl-phosphate reductase"/>
    <property type="match status" value="1"/>
</dbReference>
<dbReference type="Gene3D" id="3.30.360.10">
    <property type="entry name" value="Dihydrodipicolinate Reductase, domain 2"/>
    <property type="match status" value="1"/>
</dbReference>
<dbReference type="Gene3D" id="3.40.50.720">
    <property type="entry name" value="NAD(P)-binding Rossmann-like Domain"/>
    <property type="match status" value="1"/>
</dbReference>
<dbReference type="HAMAP" id="MF_00150">
    <property type="entry name" value="ArgC_type1"/>
    <property type="match status" value="1"/>
</dbReference>
<dbReference type="InterPro" id="IPR023013">
    <property type="entry name" value="AGPR_AS"/>
</dbReference>
<dbReference type="InterPro" id="IPR000706">
    <property type="entry name" value="AGPR_type-1"/>
</dbReference>
<dbReference type="InterPro" id="IPR036291">
    <property type="entry name" value="NAD(P)-bd_dom_sf"/>
</dbReference>
<dbReference type="InterPro" id="IPR050085">
    <property type="entry name" value="NAGSA_dehydrogenase"/>
</dbReference>
<dbReference type="InterPro" id="IPR000534">
    <property type="entry name" value="Semialdehyde_DH_NAD-bd"/>
</dbReference>
<dbReference type="NCBIfam" id="TIGR01850">
    <property type="entry name" value="argC"/>
    <property type="match status" value="1"/>
</dbReference>
<dbReference type="PANTHER" id="PTHR32338:SF10">
    <property type="entry name" value="N-ACETYL-GAMMA-GLUTAMYL-PHOSPHATE REDUCTASE, CHLOROPLASTIC-RELATED"/>
    <property type="match status" value="1"/>
</dbReference>
<dbReference type="PANTHER" id="PTHR32338">
    <property type="entry name" value="N-ACETYL-GAMMA-GLUTAMYL-PHOSPHATE REDUCTASE, CHLOROPLASTIC-RELATED-RELATED"/>
    <property type="match status" value="1"/>
</dbReference>
<dbReference type="Pfam" id="PF01118">
    <property type="entry name" value="Semialdhyde_dh"/>
    <property type="match status" value="1"/>
</dbReference>
<dbReference type="Pfam" id="PF22698">
    <property type="entry name" value="Semialdhyde_dhC_1"/>
    <property type="match status" value="1"/>
</dbReference>
<dbReference type="SMART" id="SM00859">
    <property type="entry name" value="Semialdhyde_dh"/>
    <property type="match status" value="1"/>
</dbReference>
<dbReference type="SUPFAM" id="SSF55347">
    <property type="entry name" value="Glyceraldehyde-3-phosphate dehydrogenase-like, C-terminal domain"/>
    <property type="match status" value="1"/>
</dbReference>
<dbReference type="SUPFAM" id="SSF51735">
    <property type="entry name" value="NAD(P)-binding Rossmann-fold domains"/>
    <property type="match status" value="1"/>
</dbReference>
<dbReference type="PROSITE" id="PS01224">
    <property type="entry name" value="ARGC"/>
    <property type="match status" value="1"/>
</dbReference>
<reference key="1">
    <citation type="journal article" date="2004" name="Nucleic Acids Res.">
        <title>Thermoadaptation trait revealed by the genome sequence of thermophilic Geobacillus kaustophilus.</title>
        <authorList>
            <person name="Takami H."/>
            <person name="Takaki Y."/>
            <person name="Chee G.-J."/>
            <person name="Nishi S."/>
            <person name="Shimamura S."/>
            <person name="Suzuki H."/>
            <person name="Matsui S."/>
            <person name="Uchiyama I."/>
        </authorList>
    </citation>
    <scope>NUCLEOTIDE SEQUENCE [LARGE SCALE GENOMIC DNA]</scope>
    <source>
        <strain>HTA426</strain>
    </source>
</reference>
<keyword id="KW-0028">Amino-acid biosynthesis</keyword>
<keyword id="KW-0055">Arginine biosynthesis</keyword>
<keyword id="KW-0963">Cytoplasm</keyword>
<keyword id="KW-0521">NADP</keyword>
<keyword id="KW-0560">Oxidoreductase</keyword>
<keyword id="KW-1185">Reference proteome</keyword>
<protein>
    <recommendedName>
        <fullName evidence="1">N-acetyl-gamma-glutamyl-phosphate reductase</fullName>
        <shortName evidence="1">AGPR</shortName>
        <ecNumber evidence="1">1.2.1.38</ecNumber>
    </recommendedName>
    <alternativeName>
        <fullName evidence="1">N-acetyl-glutamate semialdehyde dehydrogenase</fullName>
        <shortName evidence="1">NAGSA dehydrogenase</shortName>
    </alternativeName>
</protein>